<organism>
    <name type="scientific">Escherichia coli O45:K1 (strain S88 / ExPEC)</name>
    <dbReference type="NCBI Taxonomy" id="585035"/>
    <lineage>
        <taxon>Bacteria</taxon>
        <taxon>Pseudomonadati</taxon>
        <taxon>Pseudomonadota</taxon>
        <taxon>Gammaproteobacteria</taxon>
        <taxon>Enterobacterales</taxon>
        <taxon>Enterobacteriaceae</taxon>
        <taxon>Escherichia</taxon>
    </lineage>
</organism>
<evidence type="ECO:0000255" key="1">
    <source>
        <dbReference type="HAMAP-Rule" id="MF_00789"/>
    </source>
</evidence>
<feature type="signal peptide" evidence="1">
    <location>
        <begin position="1"/>
        <end position="20"/>
    </location>
</feature>
<feature type="chain" id="PRO_1000200488" description="UPF0319 protein YccT">
    <location>
        <begin position="21"/>
        <end position="220"/>
    </location>
</feature>
<proteinExistence type="inferred from homology"/>
<gene>
    <name evidence="1" type="primary">yccT</name>
    <name type="ordered locus">ECS88_0986</name>
</gene>
<dbReference type="EMBL" id="CU928161">
    <property type="protein sequence ID" value="CAR02318.1"/>
    <property type="molecule type" value="Genomic_DNA"/>
</dbReference>
<dbReference type="RefSeq" id="WP_000847791.1">
    <property type="nucleotide sequence ID" value="NC_011742.1"/>
</dbReference>
<dbReference type="KEGG" id="ecz:ECS88_0986"/>
<dbReference type="HOGENOM" id="CLU_073782_2_0_6"/>
<dbReference type="Proteomes" id="UP000000747">
    <property type="component" value="Chromosome"/>
</dbReference>
<dbReference type="HAMAP" id="MF_00789">
    <property type="entry name" value="UPF0319"/>
    <property type="match status" value="1"/>
</dbReference>
<dbReference type="InterPro" id="IPR018635">
    <property type="entry name" value="UPF0319"/>
</dbReference>
<dbReference type="NCBIfam" id="NF047712">
    <property type="entry name" value="CrliSynInhib"/>
    <property type="match status" value="1"/>
</dbReference>
<dbReference type="NCBIfam" id="NF002967">
    <property type="entry name" value="PRK03641.1"/>
    <property type="match status" value="1"/>
</dbReference>
<dbReference type="PANTHER" id="PTHR38108">
    <property type="entry name" value="UPF0319 PROTEIN YCCT"/>
    <property type="match status" value="1"/>
</dbReference>
<dbReference type="PANTHER" id="PTHR38108:SF1">
    <property type="entry name" value="UPF0319 PROTEIN YCCT"/>
    <property type="match status" value="1"/>
</dbReference>
<dbReference type="Pfam" id="PF09829">
    <property type="entry name" value="DUF2057"/>
    <property type="match status" value="1"/>
</dbReference>
<name>YCCT_ECO45</name>
<reference key="1">
    <citation type="journal article" date="2009" name="PLoS Genet.">
        <title>Organised genome dynamics in the Escherichia coli species results in highly diverse adaptive paths.</title>
        <authorList>
            <person name="Touchon M."/>
            <person name="Hoede C."/>
            <person name="Tenaillon O."/>
            <person name="Barbe V."/>
            <person name="Baeriswyl S."/>
            <person name="Bidet P."/>
            <person name="Bingen E."/>
            <person name="Bonacorsi S."/>
            <person name="Bouchier C."/>
            <person name="Bouvet O."/>
            <person name="Calteau A."/>
            <person name="Chiapello H."/>
            <person name="Clermont O."/>
            <person name="Cruveiller S."/>
            <person name="Danchin A."/>
            <person name="Diard M."/>
            <person name="Dossat C."/>
            <person name="Karoui M.E."/>
            <person name="Frapy E."/>
            <person name="Garry L."/>
            <person name="Ghigo J.M."/>
            <person name="Gilles A.M."/>
            <person name="Johnson J."/>
            <person name="Le Bouguenec C."/>
            <person name="Lescat M."/>
            <person name="Mangenot S."/>
            <person name="Martinez-Jehanne V."/>
            <person name="Matic I."/>
            <person name="Nassif X."/>
            <person name="Oztas S."/>
            <person name="Petit M.A."/>
            <person name="Pichon C."/>
            <person name="Rouy Z."/>
            <person name="Ruf C.S."/>
            <person name="Schneider D."/>
            <person name="Tourret J."/>
            <person name="Vacherie B."/>
            <person name="Vallenet D."/>
            <person name="Medigue C."/>
            <person name="Rocha E.P.C."/>
            <person name="Denamur E."/>
        </authorList>
    </citation>
    <scope>NUCLEOTIDE SEQUENCE [LARGE SCALE GENOMIC DNA]</scope>
    <source>
        <strain>S88 / ExPEC</strain>
    </source>
</reference>
<keyword id="KW-1185">Reference proteome</keyword>
<keyword id="KW-0732">Signal</keyword>
<protein>
    <recommendedName>
        <fullName evidence="1">UPF0319 protein YccT</fullName>
    </recommendedName>
</protein>
<comment type="similarity">
    <text evidence="1">Belongs to the UPF0319 family.</text>
</comment>
<accession>B7MIB8</accession>
<sequence length="220" mass="24594">MKTGIVTTLIALCLPVSVFATTLRLSTDVDLLVLDGKKVSSSLLRGADSIELDNGPHQLVFRVEKTIHLSNSEERLYISPPLVVSFNTQLINQVNFRLPRLENEREANHFDAAPRLELLDGDATPIPVKLDILAITSTAKTIDYEVEVERYNKSAKRASLPQFATMMADDSTLLSGVSELDAIPPQSQVLTEQRLKYWFKLADPQTRNTFLQWAEKQPSS</sequence>